<accession>Q9R0A5</accession>
<accession>E9QLM2</accession>
<accession>Q9Z0X9</accession>
<protein>
    <recommendedName>
        <fullName>Serine/threonine-protein kinase Nek3</fullName>
        <ecNumber>2.7.11.1</ecNumber>
    </recommendedName>
    <alternativeName>
        <fullName>Never in mitosis A-related kinase 3</fullName>
        <shortName>NimA-related protein kinase 3</shortName>
    </alternativeName>
</protein>
<proteinExistence type="evidence at protein level"/>
<reference key="1">
    <citation type="journal article" date="1999" name="J. Biol. Chem.">
        <title>Cloning and characterization of the murine Nek3 protein kinase, a novel member of the NIMA family of putative cell cycle regulators.</title>
        <authorList>
            <person name="Tanaka K."/>
            <person name="Nigg E.A."/>
        </authorList>
    </citation>
    <scope>NUCLEOTIDE SEQUENCE [MRNA]</scope>
</reference>
<reference key="2">
    <citation type="journal article" date="1999" name="Gene">
        <title>NIMA-related kinases: isolation and characterization of murine nek3 and nek4 cDNAs, and chromosomal localization of nek1, nek2 and nek3.</title>
        <authorList>
            <person name="Chen A."/>
            <person name="Yanai A."/>
            <person name="Arama E."/>
            <person name="Kilfin G."/>
            <person name="Motro B."/>
        </authorList>
    </citation>
    <scope>NUCLEOTIDE SEQUENCE [MRNA]</scope>
</reference>
<reference key="3">
    <citation type="journal article" date="2009" name="PLoS Biol.">
        <title>Lineage-specific biology revealed by a finished genome assembly of the mouse.</title>
        <authorList>
            <person name="Church D.M."/>
            <person name="Goodstadt L."/>
            <person name="Hillier L.W."/>
            <person name="Zody M.C."/>
            <person name="Goldstein S."/>
            <person name="She X."/>
            <person name="Bult C.J."/>
            <person name="Agarwala R."/>
            <person name="Cherry J.L."/>
            <person name="DiCuccio M."/>
            <person name="Hlavina W."/>
            <person name="Kapustin Y."/>
            <person name="Meric P."/>
            <person name="Maglott D."/>
            <person name="Birtle Z."/>
            <person name="Marques A.C."/>
            <person name="Graves T."/>
            <person name="Zhou S."/>
            <person name="Teague B."/>
            <person name="Potamousis K."/>
            <person name="Churas C."/>
            <person name="Place M."/>
            <person name="Herschleb J."/>
            <person name="Runnheim R."/>
            <person name="Forrest D."/>
            <person name="Amos-Landgraf J."/>
            <person name="Schwartz D.C."/>
            <person name="Cheng Z."/>
            <person name="Lindblad-Toh K."/>
            <person name="Eichler E.E."/>
            <person name="Ponting C.P."/>
        </authorList>
    </citation>
    <scope>NUCLEOTIDE SEQUENCE [LARGE SCALE GENOMIC DNA]</scope>
    <source>
        <strain>C57BL/6J</strain>
    </source>
</reference>
<reference key="4">
    <citation type="journal article" date="2004" name="Mol. Cell. Proteomics">
        <title>Phosphoproteomic analysis of the developing mouse brain.</title>
        <authorList>
            <person name="Ballif B.A."/>
            <person name="Villen J."/>
            <person name="Beausoleil S.A."/>
            <person name="Schwartz D."/>
            <person name="Gygi S.P."/>
        </authorList>
    </citation>
    <scope>PHOSPHORYLATION [LARGE SCALE ANALYSIS] AT THR-477</scope>
    <scope>IDENTIFICATION BY MASS SPECTROMETRY [LARGE SCALE ANALYSIS]</scope>
    <source>
        <tissue>Embryonic brain</tissue>
    </source>
</reference>
<reference key="5">
    <citation type="journal article" date="2007" name="Proc. Natl. Acad. Sci. U.S.A.">
        <title>Large-scale phosphorylation analysis of mouse liver.</title>
        <authorList>
            <person name="Villen J."/>
            <person name="Beausoleil S.A."/>
            <person name="Gerber S.A."/>
            <person name="Gygi S.P."/>
        </authorList>
    </citation>
    <scope>PHOSPHORYLATION [LARGE SCALE ANALYSIS] AT THR-477</scope>
    <scope>IDENTIFICATION BY MASS SPECTROMETRY [LARGE SCALE ANALYSIS]</scope>
    <source>
        <tissue>Liver</tissue>
    </source>
</reference>
<reference key="6">
    <citation type="journal article" date="2009" name="J. Cell Sci.">
        <title>The NIMA-family kinase Nek3 regulates microtubule acetylation in neurons.</title>
        <authorList>
            <person name="Chang J."/>
            <person name="Baloh R.H."/>
            <person name="Milbrandt J."/>
        </authorList>
    </citation>
    <scope>FUNCTION</scope>
    <scope>SUBCELLULAR LOCATION</scope>
    <scope>DEVELOPMENTAL STAGE</scope>
    <scope>TISSUE SPECIFICITY</scope>
    <scope>PHOSPHORYLATION AT THR-477</scope>
    <scope>MUTAGENESIS OF THR-477</scope>
</reference>
<reference key="7">
    <citation type="journal article" date="2010" name="Cell">
        <title>A tissue-specific atlas of mouse protein phosphorylation and expression.</title>
        <authorList>
            <person name="Huttlin E.L."/>
            <person name="Jedrychowski M.P."/>
            <person name="Elias J.E."/>
            <person name="Goswami T."/>
            <person name="Rad R."/>
            <person name="Beausoleil S.A."/>
            <person name="Villen J."/>
            <person name="Haas W."/>
            <person name="Sowa M.E."/>
            <person name="Gygi S.P."/>
        </authorList>
    </citation>
    <scope>PHOSPHORYLATION [LARGE SCALE ANALYSIS] AT THR-477</scope>
    <scope>IDENTIFICATION BY MASS SPECTROMETRY [LARGE SCALE ANALYSIS]</scope>
    <source>
        <tissue>Brain</tissue>
        <tissue>Kidney</tissue>
        <tissue>Liver</tissue>
        <tissue>Lung</tissue>
        <tissue>Pancreas</tissue>
        <tissue>Spleen</tissue>
        <tissue>Testis</tissue>
    </source>
</reference>
<feature type="chain" id="PRO_0000086424" description="Serine/threonine-protein kinase Nek3">
    <location>
        <begin position="1"/>
        <end position="511"/>
    </location>
</feature>
<feature type="domain" description="Protein kinase" evidence="3">
    <location>
        <begin position="4"/>
        <end position="255"/>
    </location>
</feature>
<feature type="region of interest" description="Interaction with VAV2" evidence="1">
    <location>
        <begin position="1"/>
        <end position="282"/>
    </location>
</feature>
<feature type="region of interest" description="Disordered" evidence="5">
    <location>
        <begin position="299"/>
        <end position="370"/>
    </location>
</feature>
<feature type="region of interest" description="Disordered" evidence="5">
    <location>
        <begin position="443"/>
        <end position="511"/>
    </location>
</feature>
<feature type="compositionally biased region" description="Basic and acidic residues" evidence="5">
    <location>
        <begin position="309"/>
        <end position="321"/>
    </location>
</feature>
<feature type="compositionally biased region" description="Acidic residues" evidence="5">
    <location>
        <begin position="472"/>
        <end position="485"/>
    </location>
</feature>
<feature type="compositionally biased region" description="Gly residues" evidence="5">
    <location>
        <begin position="498"/>
        <end position="511"/>
    </location>
</feature>
<feature type="active site" description="Proton acceptor" evidence="3 4">
    <location>
        <position position="125"/>
    </location>
</feature>
<feature type="binding site" evidence="3">
    <location>
        <begin position="10"/>
        <end position="18"/>
    </location>
    <ligand>
        <name>ATP</name>
        <dbReference type="ChEBI" id="CHEBI:30616"/>
    </ligand>
</feature>
<feature type="binding site" evidence="3">
    <location>
        <position position="33"/>
    </location>
    <ligand>
        <name>ATP</name>
        <dbReference type="ChEBI" id="CHEBI:30616"/>
    </ligand>
</feature>
<feature type="modified residue" description="N-acetylmethionine" evidence="2">
    <location>
        <position position="1"/>
    </location>
</feature>
<feature type="modified residue" description="Phosphothreonine; by autocatalysis" evidence="1">
    <location>
        <position position="159"/>
    </location>
</feature>
<feature type="modified residue" description="Phosphothreonine" evidence="6 8 9 10">
    <location>
        <position position="477"/>
    </location>
</feature>
<feature type="mutagenesis site" description="Distorted neuronal morphology with disturbed polarity and deacetylation of microtubules." evidence="6">
    <original>T</original>
    <variation>A</variation>
    <location>
        <position position="477"/>
    </location>
</feature>
<feature type="sequence conflict" description="In Ref. 1; AAD20986 and 2; AAD16286." evidence="7" ref="1 2">
    <original>K</original>
    <variation>N</variation>
    <location>
        <position position="95"/>
    </location>
</feature>
<feature type="sequence conflict" description="In Ref. 2; AAD16286." evidence="7" ref="2">
    <original>N</original>
    <variation>K</variation>
    <location>
        <position position="239"/>
    </location>
</feature>
<feature type="sequence conflict" description="In Ref. 1; AAD20986 and 2; AAD16286." evidence="7" ref="1 2">
    <original>R</original>
    <variation>G</variation>
    <location>
        <position position="296"/>
    </location>
</feature>
<feature type="sequence conflict" description="In Ref. 1; AAD20986 and 2; AAD16286." evidence="7" ref="1 2">
    <original>S</original>
    <variation>A</variation>
    <location>
        <position position="306"/>
    </location>
</feature>
<feature type="sequence conflict" description="In Ref. 1; AAD20986 and 2; AAD16286." evidence="7" ref="1 2">
    <original>E</original>
    <variation>G</variation>
    <location>
        <position position="334"/>
    </location>
</feature>
<feature type="sequence conflict" description="In Ref. 2; AAD16286." evidence="7" ref="2">
    <location>
        <begin position="342"/>
        <end position="343"/>
    </location>
</feature>
<feature type="sequence conflict" description="In Ref. 1; AAD20986 and 2; AAD16286." evidence="7" ref="1 2">
    <original>P</original>
    <variation>R</variation>
    <location>
        <position position="346"/>
    </location>
</feature>
<feature type="sequence conflict" description="In Ref. 1; AAD20986 and 2; AAD16286." evidence="7" ref="1 2">
    <original>R</original>
    <variation>S</variation>
    <location>
        <position position="351"/>
    </location>
</feature>
<feature type="sequence conflict" description="In Ref. 1; AAD20986 and 2; AAD16286." evidence="7" ref="1 2">
    <original>W</original>
    <variation>R</variation>
    <location>
        <position position="362"/>
    </location>
</feature>
<evidence type="ECO:0000250" key="1"/>
<evidence type="ECO:0000250" key="2">
    <source>
        <dbReference type="UniProtKB" id="P51956"/>
    </source>
</evidence>
<evidence type="ECO:0000255" key="3">
    <source>
        <dbReference type="PROSITE-ProRule" id="PRU00159"/>
    </source>
</evidence>
<evidence type="ECO:0000255" key="4">
    <source>
        <dbReference type="PROSITE-ProRule" id="PRU10027"/>
    </source>
</evidence>
<evidence type="ECO:0000256" key="5">
    <source>
        <dbReference type="SAM" id="MobiDB-lite"/>
    </source>
</evidence>
<evidence type="ECO:0000269" key="6">
    <source>
    </source>
</evidence>
<evidence type="ECO:0000305" key="7"/>
<evidence type="ECO:0007744" key="8">
    <source>
    </source>
</evidence>
<evidence type="ECO:0007744" key="9">
    <source>
    </source>
</evidence>
<evidence type="ECO:0007744" key="10">
    <source>
    </source>
</evidence>
<gene>
    <name type="primary">Nek3</name>
</gene>
<sequence length="511" mass="57464">MDNYTVLRVIGQGSFGRALLVLQESSNQTFAMKEIRLLKSDTQTSRKEAVLLAKMKHPNIVAFKESFEAEGYLYIVMEYCDGGDLMQRIKQQKGKLFPEDTILNWFIQICLGVNHIHKRRVLHRDIKSKNVFLTHNGKVKLGDFGSARLLSSPMAFACTYVGTPYYVPPEIWENLPYNNKSDIWSLGCILYELCALKHPFQANSWKNLILKICQGPIHPLPALYSCKLQGLVKQMLKRNPSHRPSATTLLCRGSLAPLVPKCLPPQIIREYGEQILDEIKISTPKNMKKQDSNRVRRALGEANSASMQEEERGRKCSHTELESTGTTPAGNALERAARGNPESGNPQEHGRHTSPASPHRPWWERHGPSSNVEALEKASILTSSFTAEDDRGGSVIKYEENARRQWVREPPEALLSMLKDADLSQAFQTYTIYRPGAEGFLKGPLSEDTASDSVDGDLDSVMLDPERFEPRLDEEDTDFEEDNENPDWVSELKKHVGYGDGPGGQLLGERA</sequence>
<keyword id="KW-0007">Acetylation</keyword>
<keyword id="KW-0067">ATP-binding</keyword>
<keyword id="KW-0131">Cell cycle</keyword>
<keyword id="KW-0132">Cell division</keyword>
<keyword id="KW-0966">Cell projection</keyword>
<keyword id="KW-0963">Cytoplasm</keyword>
<keyword id="KW-0418">Kinase</keyword>
<keyword id="KW-0460">Magnesium</keyword>
<keyword id="KW-0479">Metal-binding</keyword>
<keyword id="KW-0498">Mitosis</keyword>
<keyword id="KW-0547">Nucleotide-binding</keyword>
<keyword id="KW-0597">Phosphoprotein</keyword>
<keyword id="KW-1185">Reference proteome</keyword>
<keyword id="KW-0723">Serine/threonine-protein kinase</keyword>
<keyword id="KW-0808">Transferase</keyword>
<name>NEK3_MOUSE</name>
<dbReference type="EC" id="2.7.11.1"/>
<dbReference type="EMBL" id="AF093416">
    <property type="protein sequence ID" value="AAD20986.1"/>
    <property type="molecule type" value="mRNA"/>
</dbReference>
<dbReference type="EMBL" id="AF099066">
    <property type="protein sequence ID" value="AAD16286.1"/>
    <property type="molecule type" value="mRNA"/>
</dbReference>
<dbReference type="EMBL" id="AC117665">
    <property type="status" value="NOT_ANNOTATED_CDS"/>
    <property type="molecule type" value="Genomic_DNA"/>
</dbReference>
<dbReference type="CCDS" id="CCDS52519.1"/>
<dbReference type="RefSeq" id="NP_001156419.1">
    <property type="nucleotide sequence ID" value="NM_001162947.2"/>
</dbReference>
<dbReference type="RefSeq" id="XP_006509174.1">
    <property type="nucleotide sequence ID" value="XM_006509111.3"/>
</dbReference>
<dbReference type="SMR" id="Q9R0A5"/>
<dbReference type="FunCoup" id="Q9R0A5">
    <property type="interactions" value="546"/>
</dbReference>
<dbReference type="STRING" id="10090.ENSMUSP00000106358"/>
<dbReference type="GlyGen" id="Q9R0A5">
    <property type="glycosylation" value="1 site, 1 N-linked glycan (1 site)"/>
</dbReference>
<dbReference type="iPTMnet" id="Q9R0A5"/>
<dbReference type="PhosphoSitePlus" id="Q9R0A5"/>
<dbReference type="PaxDb" id="10090-ENSMUSP00000033865"/>
<dbReference type="ProteomicsDB" id="252946"/>
<dbReference type="Pumba" id="Q9R0A5"/>
<dbReference type="Antibodypedia" id="24171">
    <property type="antibodies" value="242 antibodies from 29 providers"/>
</dbReference>
<dbReference type="DNASU" id="23954"/>
<dbReference type="Ensembl" id="ENSMUST00000110730.10">
    <property type="protein sequence ID" value="ENSMUSP00000106358.4"/>
    <property type="gene ID" value="ENSMUSG00000031478.17"/>
</dbReference>
<dbReference type="Ensembl" id="ENSMUST00000178324.2">
    <property type="protein sequence ID" value="ENSMUSP00000136876.2"/>
    <property type="gene ID" value="ENSMUSG00000031478.17"/>
</dbReference>
<dbReference type="GeneID" id="23954"/>
<dbReference type="KEGG" id="mmu:23954"/>
<dbReference type="UCSC" id="uc012gbb.1">
    <property type="organism name" value="mouse"/>
</dbReference>
<dbReference type="AGR" id="MGI:1344371"/>
<dbReference type="CTD" id="4752"/>
<dbReference type="MGI" id="MGI:1344371">
    <property type="gene designation" value="Nek3"/>
</dbReference>
<dbReference type="VEuPathDB" id="HostDB:ENSMUSG00000031478"/>
<dbReference type="eggNOG" id="KOG0589">
    <property type="taxonomic scope" value="Eukaryota"/>
</dbReference>
<dbReference type="GeneTree" id="ENSGT00940000159738"/>
<dbReference type="HOGENOM" id="CLU_000288_63_39_1"/>
<dbReference type="InParanoid" id="Q9R0A5"/>
<dbReference type="OMA" id="YSYELQY"/>
<dbReference type="OrthoDB" id="248923at2759"/>
<dbReference type="PhylomeDB" id="Q9R0A5"/>
<dbReference type="BioGRID-ORCS" id="23954">
    <property type="hits" value="1 hit in 79 CRISPR screens"/>
</dbReference>
<dbReference type="PRO" id="PR:Q9R0A5"/>
<dbReference type="Proteomes" id="UP000000589">
    <property type="component" value="Chromosome 8"/>
</dbReference>
<dbReference type="RNAct" id="Q9R0A5">
    <property type="molecule type" value="protein"/>
</dbReference>
<dbReference type="Bgee" id="ENSMUSG00000031478">
    <property type="expression patterns" value="Expressed in metanephric proximal tubule and 209 other cell types or tissues"/>
</dbReference>
<dbReference type="ExpressionAtlas" id="Q9R0A5">
    <property type="expression patterns" value="baseline and differential"/>
</dbReference>
<dbReference type="GO" id="GO:0030424">
    <property type="term" value="C:axon"/>
    <property type="evidence" value="ECO:0007669"/>
    <property type="project" value="UniProtKB-SubCell"/>
</dbReference>
<dbReference type="GO" id="GO:0005737">
    <property type="term" value="C:cytoplasm"/>
    <property type="evidence" value="ECO:0007669"/>
    <property type="project" value="UniProtKB-SubCell"/>
</dbReference>
<dbReference type="GO" id="GO:0005524">
    <property type="term" value="F:ATP binding"/>
    <property type="evidence" value="ECO:0007669"/>
    <property type="project" value="UniProtKB-KW"/>
</dbReference>
<dbReference type="GO" id="GO:0046872">
    <property type="term" value="F:metal ion binding"/>
    <property type="evidence" value="ECO:0007669"/>
    <property type="project" value="UniProtKB-KW"/>
</dbReference>
<dbReference type="GO" id="GO:0106310">
    <property type="term" value="F:protein serine kinase activity"/>
    <property type="evidence" value="ECO:0007669"/>
    <property type="project" value="RHEA"/>
</dbReference>
<dbReference type="GO" id="GO:0004674">
    <property type="term" value="F:protein serine/threonine kinase activity"/>
    <property type="evidence" value="ECO:0007669"/>
    <property type="project" value="UniProtKB-KW"/>
</dbReference>
<dbReference type="GO" id="GO:0051301">
    <property type="term" value="P:cell division"/>
    <property type="evidence" value="ECO:0007669"/>
    <property type="project" value="UniProtKB-KW"/>
</dbReference>
<dbReference type="GO" id="GO:0030010">
    <property type="term" value="P:establishment of cell polarity"/>
    <property type="evidence" value="ECO:0000315"/>
    <property type="project" value="CACAO"/>
</dbReference>
<dbReference type="GO" id="GO:0048812">
    <property type="term" value="P:neuron projection morphogenesis"/>
    <property type="evidence" value="ECO:0000315"/>
    <property type="project" value="CACAO"/>
</dbReference>
<dbReference type="GO" id="GO:0006468">
    <property type="term" value="P:protein phosphorylation"/>
    <property type="evidence" value="ECO:0000314"/>
    <property type="project" value="UniProtKB"/>
</dbReference>
<dbReference type="GO" id="GO:0090043">
    <property type="term" value="P:regulation of tubulin deacetylation"/>
    <property type="evidence" value="ECO:0000315"/>
    <property type="project" value="CACAO"/>
</dbReference>
<dbReference type="FunFam" id="3.30.200.20:FF:000097">
    <property type="entry name" value="Probable serine/threonine-protein kinase nek1"/>
    <property type="match status" value="1"/>
</dbReference>
<dbReference type="FunFam" id="1.10.510.10:FF:000547">
    <property type="entry name" value="serine/threonine-protein kinase Nek3 isoform X2"/>
    <property type="match status" value="1"/>
</dbReference>
<dbReference type="Gene3D" id="3.30.200.20">
    <property type="entry name" value="Phosphorylase Kinase, domain 1"/>
    <property type="match status" value="1"/>
</dbReference>
<dbReference type="Gene3D" id="1.10.510.10">
    <property type="entry name" value="Transferase(Phosphotransferase) domain 1"/>
    <property type="match status" value="1"/>
</dbReference>
<dbReference type="InterPro" id="IPR011009">
    <property type="entry name" value="Kinase-like_dom_sf"/>
</dbReference>
<dbReference type="InterPro" id="IPR000719">
    <property type="entry name" value="Prot_kinase_dom"/>
</dbReference>
<dbReference type="InterPro" id="IPR017441">
    <property type="entry name" value="Protein_kinase_ATP_BS"/>
</dbReference>
<dbReference type="InterPro" id="IPR008271">
    <property type="entry name" value="Ser/Thr_kinase_AS"/>
</dbReference>
<dbReference type="PANTHER" id="PTHR44984">
    <property type="entry name" value="SERINE/THREONINE-PROTEIN KINASE NEK3"/>
    <property type="match status" value="1"/>
</dbReference>
<dbReference type="PANTHER" id="PTHR44984:SF1">
    <property type="entry name" value="SERINE_THREONINE-PROTEIN KINASE NEK3"/>
    <property type="match status" value="1"/>
</dbReference>
<dbReference type="Pfam" id="PF00069">
    <property type="entry name" value="Pkinase"/>
    <property type="match status" value="1"/>
</dbReference>
<dbReference type="SMART" id="SM00220">
    <property type="entry name" value="S_TKc"/>
    <property type="match status" value="1"/>
</dbReference>
<dbReference type="SUPFAM" id="SSF56112">
    <property type="entry name" value="Protein kinase-like (PK-like)"/>
    <property type="match status" value="1"/>
</dbReference>
<dbReference type="PROSITE" id="PS00107">
    <property type="entry name" value="PROTEIN_KINASE_ATP"/>
    <property type="match status" value="1"/>
</dbReference>
<dbReference type="PROSITE" id="PS50011">
    <property type="entry name" value="PROTEIN_KINASE_DOM"/>
    <property type="match status" value="1"/>
</dbReference>
<dbReference type="PROSITE" id="PS00108">
    <property type="entry name" value="PROTEIN_KINASE_ST"/>
    <property type="match status" value="1"/>
</dbReference>
<comment type="function">
    <text evidence="6">Protein kinase which influences neuronal morphogenesis and polarity through effects on microtubules. Regulates microtubule acetylation in neurons. Contributes to prolactin-mediated phosphorylation of PXN and VAV2.</text>
</comment>
<comment type="catalytic activity">
    <reaction>
        <text>L-seryl-[protein] + ATP = O-phospho-L-seryl-[protein] + ADP + H(+)</text>
        <dbReference type="Rhea" id="RHEA:17989"/>
        <dbReference type="Rhea" id="RHEA-COMP:9863"/>
        <dbReference type="Rhea" id="RHEA-COMP:11604"/>
        <dbReference type="ChEBI" id="CHEBI:15378"/>
        <dbReference type="ChEBI" id="CHEBI:29999"/>
        <dbReference type="ChEBI" id="CHEBI:30616"/>
        <dbReference type="ChEBI" id="CHEBI:83421"/>
        <dbReference type="ChEBI" id="CHEBI:456216"/>
        <dbReference type="EC" id="2.7.11.1"/>
    </reaction>
</comment>
<comment type="catalytic activity">
    <reaction>
        <text>L-threonyl-[protein] + ATP = O-phospho-L-threonyl-[protein] + ADP + H(+)</text>
        <dbReference type="Rhea" id="RHEA:46608"/>
        <dbReference type="Rhea" id="RHEA-COMP:11060"/>
        <dbReference type="Rhea" id="RHEA-COMP:11605"/>
        <dbReference type="ChEBI" id="CHEBI:15378"/>
        <dbReference type="ChEBI" id="CHEBI:30013"/>
        <dbReference type="ChEBI" id="CHEBI:30616"/>
        <dbReference type="ChEBI" id="CHEBI:61977"/>
        <dbReference type="ChEBI" id="CHEBI:456216"/>
        <dbReference type="EC" id="2.7.11.1"/>
    </reaction>
</comment>
<comment type="cofactor">
    <cofactor>
        <name>Mg(2+)</name>
        <dbReference type="ChEBI" id="CHEBI:18420"/>
    </cofactor>
</comment>
<comment type="subunit">
    <text evidence="1">Interacts with PXN, PRLR, VAV1 and VAV2 and this interaction is prolactin-dependent.</text>
</comment>
<comment type="subcellular location">
    <subcellularLocation>
        <location evidence="6">Cytoplasm</location>
    </subcellularLocation>
    <subcellularLocation>
        <location evidence="6">Cell projection</location>
        <location evidence="6">Axon</location>
    </subcellularLocation>
</comment>
<comment type="tissue specificity">
    <text evidence="6">Brain.</text>
</comment>
<comment type="developmental stage">
    <text evidence="6">Highly expressed during embryogenesis and early postnatal life, but is expressed at lower levels in adults.</text>
</comment>
<comment type="PTM">
    <text evidence="6">Phosphorylation at Thr-477 regulates its catalytic activity.</text>
</comment>
<comment type="similarity">
    <text evidence="7">Belongs to the protein kinase superfamily. NEK Ser/Thr protein kinase family. NIMA subfamily.</text>
</comment>
<organism>
    <name type="scientific">Mus musculus</name>
    <name type="common">Mouse</name>
    <dbReference type="NCBI Taxonomy" id="10090"/>
    <lineage>
        <taxon>Eukaryota</taxon>
        <taxon>Metazoa</taxon>
        <taxon>Chordata</taxon>
        <taxon>Craniata</taxon>
        <taxon>Vertebrata</taxon>
        <taxon>Euteleostomi</taxon>
        <taxon>Mammalia</taxon>
        <taxon>Eutheria</taxon>
        <taxon>Euarchontoglires</taxon>
        <taxon>Glires</taxon>
        <taxon>Rodentia</taxon>
        <taxon>Myomorpha</taxon>
        <taxon>Muroidea</taxon>
        <taxon>Muridae</taxon>
        <taxon>Murinae</taxon>
        <taxon>Mus</taxon>
        <taxon>Mus</taxon>
    </lineage>
</organism>